<name>AMPP1_ASPNC</name>
<keyword id="KW-0031">Aminopeptidase</keyword>
<keyword id="KW-0378">Hydrolase</keyword>
<keyword id="KW-0464">Manganese</keyword>
<keyword id="KW-0479">Metal-binding</keyword>
<keyword id="KW-0482">Metalloprotease</keyword>
<keyword id="KW-0645">Protease</keyword>
<keyword id="KW-1185">Reference proteome</keyword>
<gene>
    <name type="primary">ampp</name>
    <name type="ORF">An03g04230</name>
</gene>
<sequence>METVDTSERLTRLRQLMQERKVDVYIVPSEDSHQSEYIAPCDGRREFISGFSGSAGTAIISMTKAALSTDGRYFNQASKQLDSNWALLKRGVEGFPTWQEWTTEQAEGGKVVGVDPALVTPAGARSLSETLKKNGSSLVGVEQNLVDLVWGKDRPAPPREAVRVHPAQYAGKSFQEKISDLRKELENKKAAGIVISMLDEIAWLFNLRGTDIPYNPVFFSYALITPTTVDLYVDEDKLTPEVKAHLGQDVVIKPYDSIFADAKALSEARKQDATGAAPKFLLSNKASWALSLSLGGEEQVEEVRSPIADAKAIKNDVELAGMRSCHVRDGAALIEYFAWLENELINKKTTLDEVDAADKLEQIRSKHDLYAGLSFDTISSTGPNGAVIHYKPEKGSCSIIDPTAIYLCDSGAQYLDGTTDVTRTFHFGNPTDLEKKAFTLVLKGLISIDTAVFPKGTSGFALDALARQFLWKEGLDYLHGTGHGIGSYLNVHEGPMGIGTRVQYTEVPIAAGNVISDEPGFYEDGKFGIRIENVIMAREVQTTHKFGEKPWLGFEHVTTAPLGRNLINATLLSEDELKWVNEYHAEVWEKTHRFFENDDYTRSWLQRETQPISK</sequence>
<accession>A2QGR5</accession>
<organism>
    <name type="scientific">Aspergillus niger (strain ATCC MYA-4892 / CBS 513.88 / FGSC A1513)</name>
    <dbReference type="NCBI Taxonomy" id="425011"/>
    <lineage>
        <taxon>Eukaryota</taxon>
        <taxon>Fungi</taxon>
        <taxon>Dikarya</taxon>
        <taxon>Ascomycota</taxon>
        <taxon>Pezizomycotina</taxon>
        <taxon>Eurotiomycetes</taxon>
        <taxon>Eurotiomycetidae</taxon>
        <taxon>Eurotiales</taxon>
        <taxon>Aspergillaceae</taxon>
        <taxon>Aspergillus</taxon>
        <taxon>Aspergillus subgen. Circumdati</taxon>
    </lineage>
</organism>
<feature type="chain" id="PRO_0000411782" description="Probable Xaa-Pro aminopeptidase P">
    <location>
        <begin position="1"/>
        <end position="614"/>
    </location>
</feature>
<feature type="binding site" evidence="1">
    <location>
        <position position="409"/>
    </location>
    <ligand>
        <name>Mn(2+)</name>
        <dbReference type="ChEBI" id="CHEBI:29035"/>
        <label>2</label>
    </ligand>
</feature>
<feature type="binding site" evidence="1">
    <location>
        <position position="420"/>
    </location>
    <ligand>
        <name>Mn(2+)</name>
        <dbReference type="ChEBI" id="CHEBI:29035"/>
        <label>1</label>
    </ligand>
</feature>
<feature type="binding site" evidence="1">
    <location>
        <position position="420"/>
    </location>
    <ligand>
        <name>Mn(2+)</name>
        <dbReference type="ChEBI" id="CHEBI:29035"/>
        <label>2</label>
    </ligand>
</feature>
<feature type="binding site" evidence="1">
    <location>
        <position position="518"/>
    </location>
    <ligand>
        <name>Mn(2+)</name>
        <dbReference type="ChEBI" id="CHEBI:29035"/>
        <label>1</label>
    </ligand>
</feature>
<feature type="binding site" evidence="1">
    <location>
        <position position="532"/>
    </location>
    <ligand>
        <name>Mn(2+)</name>
        <dbReference type="ChEBI" id="CHEBI:29035"/>
        <label>1</label>
    </ligand>
</feature>
<feature type="binding site" evidence="1">
    <location>
        <position position="532"/>
    </location>
    <ligand>
        <name>Mn(2+)</name>
        <dbReference type="ChEBI" id="CHEBI:29035"/>
        <label>2</label>
    </ligand>
</feature>
<protein>
    <recommendedName>
        <fullName>Probable Xaa-Pro aminopeptidase P</fullName>
        <shortName>AMPP</shortName>
        <shortName>Aminopeptidase P</shortName>
        <ecNumber>3.4.11.9</ecNumber>
    </recommendedName>
    <alternativeName>
        <fullName>Aminoacylproline aminopeptidase</fullName>
    </alternativeName>
    <alternativeName>
        <fullName>Prolidase</fullName>
    </alternativeName>
</protein>
<evidence type="ECO:0000250" key="1"/>
<evidence type="ECO:0000305" key="2"/>
<comment type="function">
    <text evidence="1">Catalyzes the removal of a penultimate prolyl residue from the N-termini of peptides.</text>
</comment>
<comment type="catalytic activity">
    <reaction>
        <text>Release of any N-terminal amino acid, including proline, that is linked to proline, even from a dipeptide or tripeptide.</text>
        <dbReference type="EC" id="3.4.11.9"/>
    </reaction>
</comment>
<comment type="cofactor">
    <cofactor evidence="1">
        <name>Mn(2+)</name>
        <dbReference type="ChEBI" id="CHEBI:29035"/>
    </cofactor>
    <text evidence="1">Binds 2 manganese ions per subunit.</text>
</comment>
<comment type="similarity">
    <text evidence="2">Belongs to the peptidase M24B family.</text>
</comment>
<proteinExistence type="inferred from homology"/>
<dbReference type="EC" id="3.4.11.9"/>
<dbReference type="EMBL" id="AM270053">
    <property type="protein sequence ID" value="CAK47862.1"/>
    <property type="molecule type" value="Genomic_DNA"/>
</dbReference>
<dbReference type="RefSeq" id="XP_001390304.2">
    <property type="nucleotide sequence ID" value="XM_001390267.2"/>
</dbReference>
<dbReference type="SMR" id="A2QGR5"/>
<dbReference type="MEROPS" id="M24.A10"/>
<dbReference type="EnsemblFungi" id="CAK47862">
    <property type="protein sequence ID" value="CAK47862"/>
    <property type="gene ID" value="An03g04230"/>
</dbReference>
<dbReference type="GeneID" id="4980412"/>
<dbReference type="KEGG" id="ang:An03g04230"/>
<dbReference type="HOGENOM" id="CLU_011781_2_2_1"/>
<dbReference type="Proteomes" id="UP000006706">
    <property type="component" value="Chromosome 6R"/>
</dbReference>
<dbReference type="GO" id="GO:0005737">
    <property type="term" value="C:cytoplasm"/>
    <property type="evidence" value="ECO:0007669"/>
    <property type="project" value="UniProtKB-ARBA"/>
</dbReference>
<dbReference type="GO" id="GO:0046872">
    <property type="term" value="F:metal ion binding"/>
    <property type="evidence" value="ECO:0007669"/>
    <property type="project" value="UniProtKB-KW"/>
</dbReference>
<dbReference type="GO" id="GO:0070006">
    <property type="term" value="F:metalloaminopeptidase activity"/>
    <property type="evidence" value="ECO:0007669"/>
    <property type="project" value="InterPro"/>
</dbReference>
<dbReference type="GO" id="GO:0006508">
    <property type="term" value="P:proteolysis"/>
    <property type="evidence" value="ECO:0007669"/>
    <property type="project" value="UniProtKB-KW"/>
</dbReference>
<dbReference type="CDD" id="cd01085">
    <property type="entry name" value="APP"/>
    <property type="match status" value="1"/>
</dbReference>
<dbReference type="FunFam" id="3.40.350.10:FF:000010">
    <property type="entry name" value="Probable Xaa-Pro aminopeptidase P"/>
    <property type="match status" value="1"/>
</dbReference>
<dbReference type="FunFam" id="3.90.230.10:FF:000007">
    <property type="entry name" value="Xaa-Pro aminopeptidase P"/>
    <property type="match status" value="1"/>
</dbReference>
<dbReference type="FunFam" id="3.40.350.10:FF:000003">
    <property type="entry name" value="Xaa-pro aminopeptidase P"/>
    <property type="match status" value="1"/>
</dbReference>
<dbReference type="Gene3D" id="3.90.230.10">
    <property type="entry name" value="Creatinase/methionine aminopeptidase superfamily"/>
    <property type="match status" value="1"/>
</dbReference>
<dbReference type="Gene3D" id="3.40.350.10">
    <property type="entry name" value="Creatinase/prolidase N-terminal domain"/>
    <property type="match status" value="2"/>
</dbReference>
<dbReference type="InterPro" id="IPR029149">
    <property type="entry name" value="Creatin/AminoP/Spt16_N"/>
</dbReference>
<dbReference type="InterPro" id="IPR036005">
    <property type="entry name" value="Creatinase/aminopeptidase-like"/>
</dbReference>
<dbReference type="InterPro" id="IPR000587">
    <property type="entry name" value="Creatinase_N"/>
</dbReference>
<dbReference type="InterPro" id="IPR000994">
    <property type="entry name" value="Pept_M24"/>
</dbReference>
<dbReference type="InterPro" id="IPR033740">
    <property type="entry name" value="Pept_M24B"/>
</dbReference>
<dbReference type="InterPro" id="IPR032416">
    <property type="entry name" value="Peptidase_M24_C"/>
</dbReference>
<dbReference type="InterPro" id="IPR001131">
    <property type="entry name" value="Peptidase_M24B_aminopep-P_CS"/>
</dbReference>
<dbReference type="InterPro" id="IPR050422">
    <property type="entry name" value="X-Pro_aminopeptidase_P"/>
</dbReference>
<dbReference type="PANTHER" id="PTHR43763">
    <property type="entry name" value="XAA-PRO AMINOPEPTIDASE 1"/>
    <property type="match status" value="1"/>
</dbReference>
<dbReference type="PANTHER" id="PTHR43763:SF6">
    <property type="entry name" value="XAA-PRO AMINOPEPTIDASE 1"/>
    <property type="match status" value="1"/>
</dbReference>
<dbReference type="Pfam" id="PF01321">
    <property type="entry name" value="Creatinase_N"/>
    <property type="match status" value="1"/>
</dbReference>
<dbReference type="Pfam" id="PF16189">
    <property type="entry name" value="Creatinase_N_2"/>
    <property type="match status" value="1"/>
</dbReference>
<dbReference type="Pfam" id="PF00557">
    <property type="entry name" value="Peptidase_M24"/>
    <property type="match status" value="1"/>
</dbReference>
<dbReference type="Pfam" id="PF16188">
    <property type="entry name" value="Peptidase_M24_C"/>
    <property type="match status" value="1"/>
</dbReference>
<dbReference type="SUPFAM" id="SSF55920">
    <property type="entry name" value="Creatinase/aminopeptidase"/>
    <property type="match status" value="1"/>
</dbReference>
<dbReference type="SUPFAM" id="SSF53092">
    <property type="entry name" value="Creatinase/prolidase N-terminal domain"/>
    <property type="match status" value="1"/>
</dbReference>
<dbReference type="PROSITE" id="PS00491">
    <property type="entry name" value="PROLINE_PEPTIDASE"/>
    <property type="match status" value="1"/>
</dbReference>
<reference key="1">
    <citation type="journal article" date="2007" name="Nat. Biotechnol.">
        <title>Genome sequencing and analysis of the versatile cell factory Aspergillus niger CBS 513.88.</title>
        <authorList>
            <person name="Pel H.J."/>
            <person name="de Winde J.H."/>
            <person name="Archer D.B."/>
            <person name="Dyer P.S."/>
            <person name="Hofmann G."/>
            <person name="Schaap P.J."/>
            <person name="Turner G."/>
            <person name="de Vries R.P."/>
            <person name="Albang R."/>
            <person name="Albermann K."/>
            <person name="Andersen M.R."/>
            <person name="Bendtsen J.D."/>
            <person name="Benen J.A.E."/>
            <person name="van den Berg M."/>
            <person name="Breestraat S."/>
            <person name="Caddick M.X."/>
            <person name="Contreras R."/>
            <person name="Cornell M."/>
            <person name="Coutinho P.M."/>
            <person name="Danchin E.G.J."/>
            <person name="Debets A.J.M."/>
            <person name="Dekker P."/>
            <person name="van Dijck P.W.M."/>
            <person name="van Dijk A."/>
            <person name="Dijkhuizen L."/>
            <person name="Driessen A.J.M."/>
            <person name="d'Enfert C."/>
            <person name="Geysens S."/>
            <person name="Goosen C."/>
            <person name="Groot G.S.P."/>
            <person name="de Groot P.W.J."/>
            <person name="Guillemette T."/>
            <person name="Henrissat B."/>
            <person name="Herweijer M."/>
            <person name="van den Hombergh J.P.T.W."/>
            <person name="van den Hondel C.A.M.J.J."/>
            <person name="van der Heijden R.T.J.M."/>
            <person name="van der Kaaij R.M."/>
            <person name="Klis F.M."/>
            <person name="Kools H.J."/>
            <person name="Kubicek C.P."/>
            <person name="van Kuyk P.A."/>
            <person name="Lauber J."/>
            <person name="Lu X."/>
            <person name="van der Maarel M.J.E.C."/>
            <person name="Meulenberg R."/>
            <person name="Menke H."/>
            <person name="Mortimer M.A."/>
            <person name="Nielsen J."/>
            <person name="Oliver S.G."/>
            <person name="Olsthoorn M."/>
            <person name="Pal K."/>
            <person name="van Peij N.N.M.E."/>
            <person name="Ram A.F.J."/>
            <person name="Rinas U."/>
            <person name="Roubos J.A."/>
            <person name="Sagt C.M.J."/>
            <person name="Schmoll M."/>
            <person name="Sun J."/>
            <person name="Ussery D."/>
            <person name="Varga J."/>
            <person name="Vervecken W."/>
            <person name="van de Vondervoort P.J.J."/>
            <person name="Wedler H."/>
            <person name="Woesten H.A.B."/>
            <person name="Zeng A.-P."/>
            <person name="van Ooyen A.J.J."/>
            <person name="Visser J."/>
            <person name="Stam H."/>
        </authorList>
    </citation>
    <scope>NUCLEOTIDE SEQUENCE [LARGE SCALE GENOMIC DNA]</scope>
    <source>
        <strain>ATCC MYA-4892 / CBS 513.88 / FGSC A1513</strain>
    </source>
</reference>